<proteinExistence type="inferred from homology"/>
<dbReference type="EC" id="6.3.4.4" evidence="1"/>
<dbReference type="EMBL" id="CP001357">
    <property type="protein sequence ID" value="ACN84280.1"/>
    <property type="molecule type" value="Genomic_DNA"/>
</dbReference>
<dbReference type="RefSeq" id="WP_012671320.1">
    <property type="nucleotide sequence ID" value="NC_012225.1"/>
</dbReference>
<dbReference type="SMR" id="C0R2E2"/>
<dbReference type="STRING" id="565034.BHWA1_01817"/>
<dbReference type="KEGG" id="bhy:BHWA1_01817"/>
<dbReference type="eggNOG" id="COG0104">
    <property type="taxonomic scope" value="Bacteria"/>
</dbReference>
<dbReference type="HOGENOM" id="CLU_029848_0_0_12"/>
<dbReference type="UniPathway" id="UPA00075">
    <property type="reaction ID" value="UER00335"/>
</dbReference>
<dbReference type="Proteomes" id="UP000001803">
    <property type="component" value="Chromosome"/>
</dbReference>
<dbReference type="GO" id="GO:0005737">
    <property type="term" value="C:cytoplasm"/>
    <property type="evidence" value="ECO:0007669"/>
    <property type="project" value="UniProtKB-SubCell"/>
</dbReference>
<dbReference type="GO" id="GO:0004019">
    <property type="term" value="F:adenylosuccinate synthase activity"/>
    <property type="evidence" value="ECO:0007669"/>
    <property type="project" value="UniProtKB-UniRule"/>
</dbReference>
<dbReference type="GO" id="GO:0005525">
    <property type="term" value="F:GTP binding"/>
    <property type="evidence" value="ECO:0007669"/>
    <property type="project" value="UniProtKB-UniRule"/>
</dbReference>
<dbReference type="GO" id="GO:0000287">
    <property type="term" value="F:magnesium ion binding"/>
    <property type="evidence" value="ECO:0007669"/>
    <property type="project" value="UniProtKB-UniRule"/>
</dbReference>
<dbReference type="GO" id="GO:0044208">
    <property type="term" value="P:'de novo' AMP biosynthetic process"/>
    <property type="evidence" value="ECO:0007669"/>
    <property type="project" value="UniProtKB-UniRule"/>
</dbReference>
<dbReference type="GO" id="GO:0046040">
    <property type="term" value="P:IMP metabolic process"/>
    <property type="evidence" value="ECO:0007669"/>
    <property type="project" value="TreeGrafter"/>
</dbReference>
<dbReference type="CDD" id="cd03108">
    <property type="entry name" value="AdSS"/>
    <property type="match status" value="1"/>
</dbReference>
<dbReference type="FunFam" id="1.10.300.10:FF:000001">
    <property type="entry name" value="Adenylosuccinate synthetase"/>
    <property type="match status" value="1"/>
</dbReference>
<dbReference type="FunFam" id="3.90.170.10:FF:000001">
    <property type="entry name" value="Adenylosuccinate synthetase"/>
    <property type="match status" value="1"/>
</dbReference>
<dbReference type="Gene3D" id="3.40.440.10">
    <property type="entry name" value="Adenylosuccinate Synthetase, subunit A, domain 1"/>
    <property type="match status" value="1"/>
</dbReference>
<dbReference type="Gene3D" id="1.10.300.10">
    <property type="entry name" value="Adenylosuccinate Synthetase, subunit A, domain 2"/>
    <property type="match status" value="1"/>
</dbReference>
<dbReference type="Gene3D" id="3.90.170.10">
    <property type="entry name" value="Adenylosuccinate Synthetase, subunit A, domain 3"/>
    <property type="match status" value="1"/>
</dbReference>
<dbReference type="HAMAP" id="MF_00011">
    <property type="entry name" value="Adenylosucc_synth"/>
    <property type="match status" value="1"/>
</dbReference>
<dbReference type="InterPro" id="IPR018220">
    <property type="entry name" value="Adenylosuccin_syn_GTP-bd"/>
</dbReference>
<dbReference type="InterPro" id="IPR033128">
    <property type="entry name" value="Adenylosuccin_syn_Lys_AS"/>
</dbReference>
<dbReference type="InterPro" id="IPR042109">
    <property type="entry name" value="Adenylosuccinate_synth_dom1"/>
</dbReference>
<dbReference type="InterPro" id="IPR042110">
    <property type="entry name" value="Adenylosuccinate_synth_dom2"/>
</dbReference>
<dbReference type="InterPro" id="IPR042111">
    <property type="entry name" value="Adenylosuccinate_synth_dom3"/>
</dbReference>
<dbReference type="InterPro" id="IPR001114">
    <property type="entry name" value="Adenylosuccinate_synthetase"/>
</dbReference>
<dbReference type="InterPro" id="IPR027417">
    <property type="entry name" value="P-loop_NTPase"/>
</dbReference>
<dbReference type="NCBIfam" id="NF002223">
    <property type="entry name" value="PRK01117.1"/>
    <property type="match status" value="1"/>
</dbReference>
<dbReference type="NCBIfam" id="TIGR00184">
    <property type="entry name" value="purA"/>
    <property type="match status" value="1"/>
</dbReference>
<dbReference type="PANTHER" id="PTHR11846">
    <property type="entry name" value="ADENYLOSUCCINATE SYNTHETASE"/>
    <property type="match status" value="1"/>
</dbReference>
<dbReference type="PANTHER" id="PTHR11846:SF0">
    <property type="entry name" value="ADENYLOSUCCINATE SYNTHETASE"/>
    <property type="match status" value="1"/>
</dbReference>
<dbReference type="Pfam" id="PF00709">
    <property type="entry name" value="Adenylsucc_synt"/>
    <property type="match status" value="1"/>
</dbReference>
<dbReference type="SMART" id="SM00788">
    <property type="entry name" value="Adenylsucc_synt"/>
    <property type="match status" value="1"/>
</dbReference>
<dbReference type="SUPFAM" id="SSF52540">
    <property type="entry name" value="P-loop containing nucleoside triphosphate hydrolases"/>
    <property type="match status" value="1"/>
</dbReference>
<dbReference type="PROSITE" id="PS01266">
    <property type="entry name" value="ADENYLOSUCCIN_SYN_1"/>
    <property type="match status" value="1"/>
</dbReference>
<dbReference type="PROSITE" id="PS00513">
    <property type="entry name" value="ADENYLOSUCCIN_SYN_2"/>
    <property type="match status" value="1"/>
</dbReference>
<comment type="function">
    <text evidence="1">Plays an important role in the de novo pathway of purine nucleotide biosynthesis. Catalyzes the first committed step in the biosynthesis of AMP from IMP.</text>
</comment>
<comment type="catalytic activity">
    <reaction evidence="1">
        <text>IMP + L-aspartate + GTP = N(6)-(1,2-dicarboxyethyl)-AMP + GDP + phosphate + 2 H(+)</text>
        <dbReference type="Rhea" id="RHEA:15753"/>
        <dbReference type="ChEBI" id="CHEBI:15378"/>
        <dbReference type="ChEBI" id="CHEBI:29991"/>
        <dbReference type="ChEBI" id="CHEBI:37565"/>
        <dbReference type="ChEBI" id="CHEBI:43474"/>
        <dbReference type="ChEBI" id="CHEBI:57567"/>
        <dbReference type="ChEBI" id="CHEBI:58053"/>
        <dbReference type="ChEBI" id="CHEBI:58189"/>
        <dbReference type="EC" id="6.3.4.4"/>
    </reaction>
</comment>
<comment type="cofactor">
    <cofactor evidence="1">
        <name>Mg(2+)</name>
        <dbReference type="ChEBI" id="CHEBI:18420"/>
    </cofactor>
    <text evidence="1">Binds 1 Mg(2+) ion per subunit.</text>
</comment>
<comment type="pathway">
    <text evidence="1">Purine metabolism; AMP biosynthesis via de novo pathway; AMP from IMP: step 1/2.</text>
</comment>
<comment type="subunit">
    <text evidence="1">Homodimer.</text>
</comment>
<comment type="subcellular location">
    <subcellularLocation>
        <location evidence="1">Cytoplasm</location>
    </subcellularLocation>
</comment>
<comment type="similarity">
    <text evidence="1">Belongs to the adenylosuccinate synthetase family.</text>
</comment>
<keyword id="KW-0963">Cytoplasm</keyword>
<keyword id="KW-0342">GTP-binding</keyword>
<keyword id="KW-0436">Ligase</keyword>
<keyword id="KW-0460">Magnesium</keyword>
<keyword id="KW-0479">Metal-binding</keyword>
<keyword id="KW-0547">Nucleotide-binding</keyword>
<keyword id="KW-0658">Purine biosynthesis</keyword>
<organism>
    <name type="scientific">Brachyspira hyodysenteriae (strain ATCC 49526 / WA1)</name>
    <dbReference type="NCBI Taxonomy" id="565034"/>
    <lineage>
        <taxon>Bacteria</taxon>
        <taxon>Pseudomonadati</taxon>
        <taxon>Spirochaetota</taxon>
        <taxon>Spirochaetia</taxon>
        <taxon>Brachyspirales</taxon>
        <taxon>Brachyspiraceae</taxon>
        <taxon>Brachyspira</taxon>
    </lineage>
</organism>
<name>PURA_BRAHW</name>
<reference key="1">
    <citation type="journal article" date="2009" name="PLoS ONE">
        <title>Genome sequence of the pathogenic intestinal spirochete Brachyspira hyodysenteriae reveals adaptations to its lifestyle in the porcine large intestine.</title>
        <authorList>
            <person name="Bellgard M.I."/>
            <person name="Wanchanthuek P."/>
            <person name="La T."/>
            <person name="Ryan K."/>
            <person name="Moolhuijzen P."/>
            <person name="Albertyn Z."/>
            <person name="Shaban B."/>
            <person name="Motro Y."/>
            <person name="Dunn D.S."/>
            <person name="Schibeci D."/>
            <person name="Hunter A."/>
            <person name="Barrero R."/>
            <person name="Phillips N.D."/>
            <person name="Hampson D.J."/>
        </authorList>
    </citation>
    <scope>NUCLEOTIDE SEQUENCE [LARGE SCALE GENOMIC DNA]</scope>
    <source>
        <strain>ATCC 49526 / WA1</strain>
    </source>
</reference>
<gene>
    <name evidence="1" type="primary">purA</name>
    <name type="ordered locus">BHWA1_01817</name>
</gene>
<protein>
    <recommendedName>
        <fullName evidence="1">Adenylosuccinate synthetase</fullName>
        <shortName evidence="1">AMPSase</shortName>
        <shortName evidence="1">AdSS</shortName>
        <ecNumber evidence="1">6.3.4.4</ecNumber>
    </recommendedName>
    <alternativeName>
        <fullName evidence="1">IMP--aspartate ligase</fullName>
    </alternativeName>
</protein>
<sequence>MASVIIVGTQWGDEGKGKIVDYLAENCEYVVRSQGGSNAGHTVVVDNIKYKLRLLPSGILHKDKVCVIGNGVVIEPKVFLSEIDSLIEKKVNISNLKISDRAHVLMPYHKILDELQEEDLGENKLGTTKNGIGPCYMDKSSRLGIRIVDLMNKETFAKKLKFNVELKNKLLKKLYNHDGVNYDELLKEYLGYAEKLRPFVADTTTILNKAIKEKKNILFEGAQATMLDLDHGTYPFVTSSYPAAGGACTGSGVGPRKIDNVIGVVKAYATRVGEGPFPSELFDDVGQFIRDKGGEYGTVTGRARRCGWLDACVVKYASYVNGLDSIAITRLDILDELDKLKICVAYKYNSEILEGYPADLDILSKVEPVYEEFEGWKTSTRDIREYDKLPENAKKYLKRLSEVIETDISIVSVGAGRDETIIVKKIF</sequence>
<feature type="chain" id="PRO_1000116455" description="Adenylosuccinate synthetase">
    <location>
        <begin position="1"/>
        <end position="427"/>
    </location>
</feature>
<feature type="active site" description="Proton acceptor" evidence="1">
    <location>
        <position position="13"/>
    </location>
</feature>
<feature type="active site" description="Proton donor" evidence="1">
    <location>
        <position position="41"/>
    </location>
</feature>
<feature type="binding site" evidence="1">
    <location>
        <begin position="12"/>
        <end position="18"/>
    </location>
    <ligand>
        <name>GTP</name>
        <dbReference type="ChEBI" id="CHEBI:37565"/>
    </ligand>
</feature>
<feature type="binding site" description="in other chain" evidence="1">
    <location>
        <begin position="13"/>
        <end position="16"/>
    </location>
    <ligand>
        <name>IMP</name>
        <dbReference type="ChEBI" id="CHEBI:58053"/>
        <note>ligand shared between dimeric partners</note>
    </ligand>
</feature>
<feature type="binding site" evidence="1">
    <location>
        <position position="13"/>
    </location>
    <ligand>
        <name>Mg(2+)</name>
        <dbReference type="ChEBI" id="CHEBI:18420"/>
    </ligand>
</feature>
<feature type="binding site" description="in other chain" evidence="1">
    <location>
        <begin position="38"/>
        <end position="41"/>
    </location>
    <ligand>
        <name>IMP</name>
        <dbReference type="ChEBI" id="CHEBI:58053"/>
        <note>ligand shared between dimeric partners</note>
    </ligand>
</feature>
<feature type="binding site" evidence="1">
    <location>
        <begin position="40"/>
        <end position="42"/>
    </location>
    <ligand>
        <name>GTP</name>
        <dbReference type="ChEBI" id="CHEBI:37565"/>
    </ligand>
</feature>
<feature type="binding site" evidence="1">
    <location>
        <position position="40"/>
    </location>
    <ligand>
        <name>Mg(2+)</name>
        <dbReference type="ChEBI" id="CHEBI:18420"/>
    </ligand>
</feature>
<feature type="binding site" description="in other chain" evidence="1">
    <location>
        <position position="128"/>
    </location>
    <ligand>
        <name>IMP</name>
        <dbReference type="ChEBI" id="CHEBI:58053"/>
        <note>ligand shared between dimeric partners</note>
    </ligand>
</feature>
<feature type="binding site" evidence="1">
    <location>
        <position position="142"/>
    </location>
    <ligand>
        <name>IMP</name>
        <dbReference type="ChEBI" id="CHEBI:58053"/>
        <note>ligand shared between dimeric partners</note>
    </ligand>
</feature>
<feature type="binding site" description="in other chain" evidence="1">
    <location>
        <position position="223"/>
    </location>
    <ligand>
        <name>IMP</name>
        <dbReference type="ChEBI" id="CHEBI:58053"/>
        <note>ligand shared between dimeric partners</note>
    </ligand>
</feature>
<feature type="binding site" description="in other chain" evidence="1">
    <location>
        <position position="238"/>
    </location>
    <ligand>
        <name>IMP</name>
        <dbReference type="ChEBI" id="CHEBI:58053"/>
        <note>ligand shared between dimeric partners</note>
    </ligand>
</feature>
<feature type="binding site" evidence="1">
    <location>
        <begin position="298"/>
        <end position="304"/>
    </location>
    <ligand>
        <name>substrate</name>
    </ligand>
</feature>
<feature type="binding site" description="in other chain" evidence="1">
    <location>
        <position position="302"/>
    </location>
    <ligand>
        <name>IMP</name>
        <dbReference type="ChEBI" id="CHEBI:58053"/>
        <note>ligand shared between dimeric partners</note>
    </ligand>
</feature>
<feature type="binding site" evidence="1">
    <location>
        <position position="304"/>
    </location>
    <ligand>
        <name>GTP</name>
        <dbReference type="ChEBI" id="CHEBI:37565"/>
    </ligand>
</feature>
<feature type="binding site" evidence="1">
    <location>
        <begin position="330"/>
        <end position="332"/>
    </location>
    <ligand>
        <name>GTP</name>
        <dbReference type="ChEBI" id="CHEBI:37565"/>
    </ligand>
</feature>
<feature type="binding site" evidence="1">
    <location>
        <begin position="412"/>
        <end position="414"/>
    </location>
    <ligand>
        <name>GTP</name>
        <dbReference type="ChEBI" id="CHEBI:37565"/>
    </ligand>
</feature>
<evidence type="ECO:0000255" key="1">
    <source>
        <dbReference type="HAMAP-Rule" id="MF_00011"/>
    </source>
</evidence>
<accession>C0R2E2</accession>